<name>YCIB_SALSV</name>
<proteinExistence type="inferred from homology"/>
<feature type="chain" id="PRO_1000098897" description="Inner membrane-spanning protein YciB">
    <location>
        <begin position="1"/>
        <end position="179"/>
    </location>
</feature>
<feature type="transmembrane region" description="Helical" evidence="1">
    <location>
        <begin position="22"/>
        <end position="42"/>
    </location>
</feature>
<feature type="transmembrane region" description="Helical" evidence="1">
    <location>
        <begin position="50"/>
        <end position="70"/>
    </location>
</feature>
<feature type="transmembrane region" description="Helical" evidence="1">
    <location>
        <begin position="76"/>
        <end position="96"/>
    </location>
</feature>
<feature type="transmembrane region" description="Helical" evidence="1">
    <location>
        <begin position="121"/>
        <end position="141"/>
    </location>
</feature>
<feature type="transmembrane region" description="Helical" evidence="1">
    <location>
        <begin position="149"/>
        <end position="169"/>
    </location>
</feature>
<dbReference type="EMBL" id="CP001127">
    <property type="protein sequence ID" value="ACF92937.1"/>
    <property type="molecule type" value="Genomic_DNA"/>
</dbReference>
<dbReference type="RefSeq" id="WP_000808682.1">
    <property type="nucleotide sequence ID" value="NC_011094.1"/>
</dbReference>
<dbReference type="KEGG" id="sew:SeSA_A1868"/>
<dbReference type="HOGENOM" id="CLU_089554_2_0_6"/>
<dbReference type="Proteomes" id="UP000001865">
    <property type="component" value="Chromosome"/>
</dbReference>
<dbReference type="GO" id="GO:0005886">
    <property type="term" value="C:plasma membrane"/>
    <property type="evidence" value="ECO:0007669"/>
    <property type="project" value="UniProtKB-SubCell"/>
</dbReference>
<dbReference type="HAMAP" id="MF_00189">
    <property type="entry name" value="YciB"/>
    <property type="match status" value="1"/>
</dbReference>
<dbReference type="InterPro" id="IPR006008">
    <property type="entry name" value="YciB"/>
</dbReference>
<dbReference type="NCBIfam" id="TIGR00997">
    <property type="entry name" value="ispZ"/>
    <property type="match status" value="1"/>
</dbReference>
<dbReference type="NCBIfam" id="NF001324">
    <property type="entry name" value="PRK00259.1-2"/>
    <property type="match status" value="1"/>
</dbReference>
<dbReference type="NCBIfam" id="NF001325">
    <property type="entry name" value="PRK00259.1-3"/>
    <property type="match status" value="1"/>
</dbReference>
<dbReference type="NCBIfam" id="NF001326">
    <property type="entry name" value="PRK00259.1-4"/>
    <property type="match status" value="1"/>
</dbReference>
<dbReference type="PANTHER" id="PTHR36917:SF1">
    <property type="entry name" value="INNER MEMBRANE-SPANNING PROTEIN YCIB"/>
    <property type="match status" value="1"/>
</dbReference>
<dbReference type="PANTHER" id="PTHR36917">
    <property type="entry name" value="INTRACELLULAR SEPTATION PROTEIN A-RELATED"/>
    <property type="match status" value="1"/>
</dbReference>
<dbReference type="Pfam" id="PF04279">
    <property type="entry name" value="IspA"/>
    <property type="match status" value="1"/>
</dbReference>
<gene>
    <name evidence="1" type="primary">yciB</name>
    <name type="ordered locus">SeSA_A1868</name>
</gene>
<evidence type="ECO:0000255" key="1">
    <source>
        <dbReference type="HAMAP-Rule" id="MF_00189"/>
    </source>
</evidence>
<sequence length="179" mass="20763">MKQFLDFLPLVVFFAFYKLYDIYAATSALIVATAIVLIYSWVRYRKIEKMALITFVLVAVFGGLTLFFHNDEFIKWKVTVIYALFAGALLISQWVMKKPLIQRMLGKELALPQQVWSKLNLAWALFFIACGLANIYIAFWLPQNIWVNFKVFGLTALTLIFTLLSGVYIYRHLPQEDKS</sequence>
<comment type="function">
    <text evidence="1">Plays a role in cell envelope biogenesis, maintenance of cell envelope integrity and membrane homeostasis.</text>
</comment>
<comment type="subcellular location">
    <subcellularLocation>
        <location evidence="1">Cell inner membrane</location>
        <topology evidence="1">Multi-pass membrane protein</topology>
    </subcellularLocation>
</comment>
<comment type="similarity">
    <text evidence="1">Belongs to the YciB family.</text>
</comment>
<protein>
    <recommendedName>
        <fullName evidence="1">Inner membrane-spanning protein YciB</fullName>
    </recommendedName>
</protein>
<organism>
    <name type="scientific">Salmonella schwarzengrund (strain CVM19633)</name>
    <dbReference type="NCBI Taxonomy" id="439843"/>
    <lineage>
        <taxon>Bacteria</taxon>
        <taxon>Pseudomonadati</taxon>
        <taxon>Pseudomonadota</taxon>
        <taxon>Gammaproteobacteria</taxon>
        <taxon>Enterobacterales</taxon>
        <taxon>Enterobacteriaceae</taxon>
        <taxon>Salmonella</taxon>
    </lineage>
</organism>
<keyword id="KW-0997">Cell inner membrane</keyword>
<keyword id="KW-1003">Cell membrane</keyword>
<keyword id="KW-0472">Membrane</keyword>
<keyword id="KW-0812">Transmembrane</keyword>
<keyword id="KW-1133">Transmembrane helix</keyword>
<accession>B4TX48</accession>
<reference key="1">
    <citation type="journal article" date="2011" name="J. Bacteriol.">
        <title>Comparative genomics of 28 Salmonella enterica isolates: evidence for CRISPR-mediated adaptive sublineage evolution.</title>
        <authorList>
            <person name="Fricke W.F."/>
            <person name="Mammel M.K."/>
            <person name="McDermott P.F."/>
            <person name="Tartera C."/>
            <person name="White D.G."/>
            <person name="Leclerc J.E."/>
            <person name="Ravel J."/>
            <person name="Cebula T.A."/>
        </authorList>
    </citation>
    <scope>NUCLEOTIDE SEQUENCE [LARGE SCALE GENOMIC DNA]</scope>
    <source>
        <strain>CVM19633</strain>
    </source>
</reference>